<reference key="1">
    <citation type="journal article" date="2015" name="Mol. Plant Microbe Interact.">
        <title>Genome, transcriptome, and functional analyses of Penicillium expansum provide new insights into secondary metabolism and pathogenicity.</title>
        <authorList>
            <person name="Ballester A.R."/>
            <person name="Marcet-Houben M."/>
            <person name="Levin E."/>
            <person name="Sela N."/>
            <person name="Selma-Lazaro C."/>
            <person name="Carmona L."/>
            <person name="Wisniewski M."/>
            <person name="Droby S."/>
            <person name="Gonzalez-Candelas L."/>
            <person name="Gabaldon T."/>
        </authorList>
    </citation>
    <scope>NUCLEOTIDE SEQUENCE [LARGE SCALE GENOMIC DNA]</scope>
    <source>
        <strain>MD-8</strain>
    </source>
</reference>
<reference key="2">
    <citation type="journal article" date="2022" name="Fungal Genet. Biol.">
        <title>Marker-free CRISPR-Cas9 based genetic engineering of the phytopathogenic fungus, Penicillium expansum.</title>
        <authorList>
            <person name="Clemmensen S.E."/>
            <person name="Kromphardt K.J.K."/>
            <person name="Frandsen R.J.N."/>
        </authorList>
    </citation>
    <scope>IDENTIFICATION</scope>
    <scope>FUNCTION</scope>
    <scope>INDUCTION</scope>
</reference>
<accession>A0A0A2KT65</accession>
<dbReference type="EC" id="2.3.1.-" evidence="1"/>
<dbReference type="EMBL" id="JQFZ01000147">
    <property type="protein sequence ID" value="KGO57402.1"/>
    <property type="molecule type" value="Genomic_DNA"/>
</dbReference>
<dbReference type="RefSeq" id="XP_016599070.1">
    <property type="nucleotide sequence ID" value="XM_016737355.1"/>
</dbReference>
<dbReference type="SMR" id="A0A0A2KT65"/>
<dbReference type="STRING" id="27334.A0A0A2KT65"/>
<dbReference type="GeneID" id="27672774"/>
<dbReference type="VEuPathDB" id="FungiDB:PEXP_096630"/>
<dbReference type="HOGENOM" id="CLU_000022_6_0_1"/>
<dbReference type="OrthoDB" id="329835at2759"/>
<dbReference type="PhylomeDB" id="A0A0A2KT65"/>
<dbReference type="UniPathway" id="UPA00167"/>
<dbReference type="Proteomes" id="UP000030143">
    <property type="component" value="Unassembled WGS sequence"/>
</dbReference>
<dbReference type="GO" id="GO:0004315">
    <property type="term" value="F:3-oxoacyl-[acyl-carrier-protein] synthase activity"/>
    <property type="evidence" value="ECO:0007669"/>
    <property type="project" value="InterPro"/>
</dbReference>
<dbReference type="GO" id="GO:0004312">
    <property type="term" value="F:fatty acid synthase activity"/>
    <property type="evidence" value="ECO:0007669"/>
    <property type="project" value="TreeGrafter"/>
</dbReference>
<dbReference type="GO" id="GO:0031177">
    <property type="term" value="F:phosphopantetheine binding"/>
    <property type="evidence" value="ECO:0007669"/>
    <property type="project" value="InterPro"/>
</dbReference>
<dbReference type="GO" id="GO:0017000">
    <property type="term" value="P:antibiotic biosynthetic process"/>
    <property type="evidence" value="ECO:0007669"/>
    <property type="project" value="UniProtKB-ARBA"/>
</dbReference>
<dbReference type="GO" id="GO:0006633">
    <property type="term" value="P:fatty acid biosynthetic process"/>
    <property type="evidence" value="ECO:0007669"/>
    <property type="project" value="InterPro"/>
</dbReference>
<dbReference type="GO" id="GO:0030639">
    <property type="term" value="P:polyketide biosynthetic process"/>
    <property type="evidence" value="ECO:0007669"/>
    <property type="project" value="UniProtKB-ARBA"/>
</dbReference>
<dbReference type="CDD" id="cd00833">
    <property type="entry name" value="PKS"/>
    <property type="match status" value="1"/>
</dbReference>
<dbReference type="FunFam" id="3.40.366.10:FF:000002">
    <property type="entry name" value="Probable polyketide synthase 2"/>
    <property type="match status" value="1"/>
</dbReference>
<dbReference type="FunFam" id="1.10.1200.10:FF:000011">
    <property type="entry name" value="Sterigmatocystin biosynthesis polyketide synthase"/>
    <property type="match status" value="2"/>
</dbReference>
<dbReference type="FunFam" id="3.10.129.110:FF:000001">
    <property type="entry name" value="Sterigmatocystin biosynthesis polyketide synthase"/>
    <property type="match status" value="1"/>
</dbReference>
<dbReference type="FunFam" id="3.40.47.10:FF:000031">
    <property type="entry name" value="Sterigmatocystin biosynthesis polyketide synthase"/>
    <property type="match status" value="1"/>
</dbReference>
<dbReference type="FunFam" id="3.40.50.1820:FF:000116">
    <property type="entry name" value="Sterigmatocystin biosynthesis polyketide synthase"/>
    <property type="match status" value="1"/>
</dbReference>
<dbReference type="Gene3D" id="3.30.70.3290">
    <property type="match status" value="1"/>
</dbReference>
<dbReference type="Gene3D" id="3.40.47.10">
    <property type="match status" value="1"/>
</dbReference>
<dbReference type="Gene3D" id="1.10.1200.10">
    <property type="entry name" value="ACP-like"/>
    <property type="match status" value="2"/>
</dbReference>
<dbReference type="Gene3D" id="3.40.50.1820">
    <property type="entry name" value="alpha/beta hydrolase"/>
    <property type="match status" value="1"/>
</dbReference>
<dbReference type="Gene3D" id="3.40.366.10">
    <property type="entry name" value="Malonyl-Coenzyme A Acyl Carrier Protein, domain 2"/>
    <property type="match status" value="2"/>
</dbReference>
<dbReference type="Gene3D" id="3.10.129.110">
    <property type="entry name" value="Polyketide synthase dehydratase"/>
    <property type="match status" value="1"/>
</dbReference>
<dbReference type="InterPro" id="IPR029058">
    <property type="entry name" value="AB_hydrolase_fold"/>
</dbReference>
<dbReference type="InterPro" id="IPR001227">
    <property type="entry name" value="Ac_transferase_dom_sf"/>
</dbReference>
<dbReference type="InterPro" id="IPR036736">
    <property type="entry name" value="ACP-like_sf"/>
</dbReference>
<dbReference type="InterPro" id="IPR014043">
    <property type="entry name" value="Acyl_transferase_dom"/>
</dbReference>
<dbReference type="InterPro" id="IPR016035">
    <property type="entry name" value="Acyl_Trfase/lysoPLipase"/>
</dbReference>
<dbReference type="InterPro" id="IPR018201">
    <property type="entry name" value="Ketoacyl_synth_AS"/>
</dbReference>
<dbReference type="InterPro" id="IPR014031">
    <property type="entry name" value="Ketoacyl_synth_C"/>
</dbReference>
<dbReference type="InterPro" id="IPR014030">
    <property type="entry name" value="Ketoacyl_synth_N"/>
</dbReference>
<dbReference type="InterPro" id="IPR016036">
    <property type="entry name" value="Malonyl_transacylase_ACP-bd"/>
</dbReference>
<dbReference type="InterPro" id="IPR020841">
    <property type="entry name" value="PKS_Beta-ketoAc_synthase_dom"/>
</dbReference>
<dbReference type="InterPro" id="IPR042104">
    <property type="entry name" value="PKS_dehydratase_sf"/>
</dbReference>
<dbReference type="InterPro" id="IPR049900">
    <property type="entry name" value="PKS_mFAS_DH"/>
</dbReference>
<dbReference type="InterPro" id="IPR050091">
    <property type="entry name" value="PKS_NRPS_Biosynth_Enz"/>
</dbReference>
<dbReference type="InterPro" id="IPR020806">
    <property type="entry name" value="PKS_PP-bd"/>
</dbReference>
<dbReference type="InterPro" id="IPR009081">
    <property type="entry name" value="PP-bd_ACP"/>
</dbReference>
<dbReference type="InterPro" id="IPR006162">
    <property type="entry name" value="Ppantetheine_attach_site"/>
</dbReference>
<dbReference type="InterPro" id="IPR030918">
    <property type="entry name" value="PT_fungal_PKS"/>
</dbReference>
<dbReference type="InterPro" id="IPR032088">
    <property type="entry name" value="SAT"/>
</dbReference>
<dbReference type="InterPro" id="IPR001031">
    <property type="entry name" value="Thioesterase"/>
</dbReference>
<dbReference type="InterPro" id="IPR016039">
    <property type="entry name" value="Thiolase-like"/>
</dbReference>
<dbReference type="NCBIfam" id="TIGR04532">
    <property type="entry name" value="PT_fungal_PKS"/>
    <property type="match status" value="1"/>
</dbReference>
<dbReference type="PANTHER" id="PTHR43775:SF45">
    <property type="entry name" value="CONIDIAL PIGMENT POLYKETIDE SYNTHASE ALB1"/>
    <property type="match status" value="1"/>
</dbReference>
<dbReference type="PANTHER" id="PTHR43775">
    <property type="entry name" value="FATTY ACID SYNTHASE"/>
    <property type="match status" value="1"/>
</dbReference>
<dbReference type="Pfam" id="PF00698">
    <property type="entry name" value="Acyl_transf_1"/>
    <property type="match status" value="1"/>
</dbReference>
<dbReference type="Pfam" id="PF22621">
    <property type="entry name" value="CurL-like_PKS_C"/>
    <property type="match status" value="1"/>
</dbReference>
<dbReference type="Pfam" id="PF00109">
    <property type="entry name" value="ketoacyl-synt"/>
    <property type="match status" value="1"/>
</dbReference>
<dbReference type="Pfam" id="PF02801">
    <property type="entry name" value="Ketoacyl-synt_C"/>
    <property type="match status" value="1"/>
</dbReference>
<dbReference type="Pfam" id="PF00550">
    <property type="entry name" value="PP-binding"/>
    <property type="match status" value="2"/>
</dbReference>
<dbReference type="Pfam" id="PF16073">
    <property type="entry name" value="SAT"/>
    <property type="match status" value="1"/>
</dbReference>
<dbReference type="Pfam" id="PF00975">
    <property type="entry name" value="Thioesterase"/>
    <property type="match status" value="1"/>
</dbReference>
<dbReference type="SMART" id="SM00827">
    <property type="entry name" value="PKS_AT"/>
    <property type="match status" value="1"/>
</dbReference>
<dbReference type="SMART" id="SM00825">
    <property type="entry name" value="PKS_KS"/>
    <property type="match status" value="1"/>
</dbReference>
<dbReference type="SMART" id="SM00823">
    <property type="entry name" value="PKS_PP"/>
    <property type="match status" value="2"/>
</dbReference>
<dbReference type="SUPFAM" id="SSF47336">
    <property type="entry name" value="ACP-like"/>
    <property type="match status" value="2"/>
</dbReference>
<dbReference type="SUPFAM" id="SSF53474">
    <property type="entry name" value="alpha/beta-Hydrolases"/>
    <property type="match status" value="1"/>
</dbReference>
<dbReference type="SUPFAM" id="SSF52151">
    <property type="entry name" value="FabD/lysophospholipase-like"/>
    <property type="match status" value="1"/>
</dbReference>
<dbReference type="SUPFAM" id="SSF55048">
    <property type="entry name" value="Probable ACP-binding domain of malonyl-CoA ACP transacylase"/>
    <property type="match status" value="1"/>
</dbReference>
<dbReference type="SUPFAM" id="SSF53901">
    <property type="entry name" value="Thiolase-like"/>
    <property type="match status" value="1"/>
</dbReference>
<dbReference type="PROSITE" id="PS50075">
    <property type="entry name" value="CARRIER"/>
    <property type="match status" value="2"/>
</dbReference>
<dbReference type="PROSITE" id="PS00606">
    <property type="entry name" value="KS3_1"/>
    <property type="match status" value="1"/>
</dbReference>
<dbReference type="PROSITE" id="PS52004">
    <property type="entry name" value="KS3_2"/>
    <property type="match status" value="1"/>
</dbReference>
<dbReference type="PROSITE" id="PS00012">
    <property type="entry name" value="PHOSPHOPANTETHEINE"/>
    <property type="match status" value="1"/>
</dbReference>
<dbReference type="PROSITE" id="PS52019">
    <property type="entry name" value="PKS_MFAS_DH"/>
    <property type="match status" value="1"/>
</dbReference>
<proteinExistence type="evidence at transcript level"/>
<sequence length="2138" mass="233216">MEGPSHVYLFGDQTADFDSGLRRLLHAKNDSLLAAFFQKSYYALRKEITSLPPSERQGFPRFTSIVDLLARFKESGPNPALESALTTIHQLGCFIHYYGDLGHAYPSADESCIIGLCTGQLASAAVSSSRTIGELISAGIETVVLALRLGMCVLKVQELIEPSKSATPSWSVLISGMHEPEAENLIQQYAKKNALPRVSQPYISAVSPNGLTISGPPTFLSRFIEDSVSKEHKPTRVPIHGPYHASHLYDDRDINRILESWPTEQFMTFVPQIPVISSETGKEFQAESLEQLLRLSLQEILQRQLCWDKVIESCQETLELATTCTLFPISSTATQSLFNSLKKAGVSNLEVDSTIGDVQKDSEGDNRTGRAEQSKIAIIGLSGRFPESPDTEAFWDLLKKGLDVHREVPPERWDVKAHVDKDGKIRNTSQVQYGCWYNDAGMFDPRFFNMSPREALQADPAQRLALLTAYEALEMAGFIPDSTPSTQKNRVGVFYGMTSDDYREVNSGQDIDTYFIPGGNRAFTPGRINYYFKFSGPSVSVDTACSSSLAAIHVACNSLWRNECDSAVAGGVNILTNPDNHAGLDRGHFLSRTGNCTTFDDGADGYCRADGIGSIVIKRLEDAQADNDPIYGIIGGAYTNHSAEAVSITRPHVGAQSFIFDKLLNESNSDPKEISYIEMHGTGTQAGDAVEMQSVLDVFAPDYRRGPAQSLHLGSAKSNVGHGESASGVTALIKVLMMMQKNMIPPHCGIKTKINHNFPTDFPQRNVHIASEPTPWNRPNGGKRKTFVNNFSAAGGNTALMVEDGPLDEENVEDPRSAHPVLVSARSQSALKNNISALVQYIDKNKNLFNSNEASLLANLSYTTTARRIHHPFRVAVTGSTLDEVRSGLAPIVNRDSISPAPANAPGIGFVFTGQGAQYTGMGRQLFESCSQFRAHIEHLNCIGQSQGFPSILSLVDGSVPIEEHSPVVTQLGTTCVQMALTKYWMSLGISPAFVIGHSLGEFAALNASGVLTTSDTIYLAGRRAQLLTEQIKVGTHAMLAVKSSVAQVKQFLDDATEVACINAPSETVISGAREKIDELAQTLTNEGFKATKLNVPFAFHSAQVEPILESLSEIGKGVNFNAPSIPFVSALLGDVINESNSELLGPNYLTRHCRETVNFLGALEATRHSNLMNDKTIWIEIGSHPVCSGMVKATFGPQATTVASLRRQEDTWKVLSASVSALYMAGIELRWKEYHQDFTAGHKVLPLPSYKWDLKNYWIPYTNNFCLLKGAPAVPVAEAAPVAVFLSSAAQRVLETSGDNSSASIVIENDIADPELNRVIAGHKVNGACLTPSSLYADIAQTLGEYLVQNYKPEWKDRGFDICNMMVPKPLIAKGGKQLFRVSATANWAEESAKVQVWSVTPEGKKILDHASCNIKFFDPSPYELEWKRSSYLIKRSIEHLQESTISGQAHRMKRGMVYKLFASLVDYDDNYKSMREVILDSEQHEATAVVKFEAPPGNFHRNPFWIDSIGHLSGFIMNASDNTDSKNQVFVNHGWDSMRCLKKFDPSVTYRTYVRMQPWKDSIWAGDVYMFDGDDVVAVYGGVKFQGLARKILDMALPPGGASAPKPAAKRVPAPINVQKAKPSVTKKASPSPKSGLPSMATRALAILAEEVGLAASEMTDDLNFADYGVDSLLSLTVTGRYREDMGLDLDSTVFVDSPTVKDFKHLLAQMGPGESSDGSSSEGDMSSAASSTDLSSPNTSGLPTPANEKSMTHGLQGQNDSMRQIASILAEEIGVDSEELLGDANLGEMGLDSLMSLTVLGKIREDLDLDLPGEFFIENQTLDDIETTLDLKPKLAPAEPIRLPEQIPVEAPVVAHSTATQHPPATSILLQGNPKTATQSLFLFPDGSGSATSYATIPGISPDVCVYGLNCPYMRTPENLKFSLDELTAPYVAEIRRRQPTGPYNFGGWSAGGICAYDAARKLIFEEGERVERLLLLDSPFPIGLEKLPPRLYSFFDTIGLFGEGKAPPPKWLLPHFLAFIDSLDAYKAVPFPYEDPKHADKLPKTFMVWAKDGVCSKPGDARPAPAADGSADPREMLWLLNNRTDLGPNGWDTLVGPKHVGGITVMEDANHFTMTRGQKAKELARFIANSMASA</sequence>
<comment type="function">
    <text evidence="1 9">Non-reducing polyketide synthase involved in the biosynthesis of a yellow conidial pigment (PubMed:35339702). Probably forms the heptaketide naphthopyrene YWA1 via condensation of acetate units (By similarity).</text>
</comment>
<comment type="catalytic activity">
    <reaction evidence="1">
        <text>6 malonyl-CoA + acetyl-CoA + 6 H(+) = naphtopyrone YWA1 + 6 CO2 + 7 CoA + H2O</text>
        <dbReference type="Rhea" id="RHEA:62652"/>
        <dbReference type="ChEBI" id="CHEBI:15377"/>
        <dbReference type="ChEBI" id="CHEBI:15378"/>
        <dbReference type="ChEBI" id="CHEBI:16526"/>
        <dbReference type="ChEBI" id="CHEBI:57287"/>
        <dbReference type="ChEBI" id="CHEBI:57288"/>
        <dbReference type="ChEBI" id="CHEBI:57384"/>
        <dbReference type="ChEBI" id="CHEBI:133763"/>
    </reaction>
    <physiologicalReaction direction="left-to-right" evidence="1">
        <dbReference type="Rhea" id="RHEA:62653"/>
    </physiologicalReaction>
</comment>
<comment type="pathway">
    <text evidence="9">Pigment biosynthesis.</text>
</comment>
<comment type="pathway">
    <text evidence="1">Polyketide biosynthesis; heptaketide naphthopyrone YWA1 biosynthesis.</text>
</comment>
<comment type="induction">
    <text evidence="9">Expression is limited to the conidia.</text>
</comment>
<comment type="domain">
    <text evidence="2">Multidomain protein; including a starter unit:ACP transacylase (SAT) that selects the starter unit; a ketosynthase (KS) that catalyzes repeated decarboxylative condensation to elongate the polyketide backbone; a malonyl-CoA:ACP transacylase (MAT) that selects and transfers the extender unit malonyl-CoA; a product template (PT) domain that controls the immediate cyclization regioselectivity of the reactive polyketide backbone; and 2 acyl-carrier protein (ACP) domains that serve as the tethers of the growing and completed polyketide via their phosphopantetheinyl arm.</text>
</comment>
<comment type="domain">
    <text evidence="1">The C-terminal region is involved in Claisen-type cyclization of the second ring of naphthopyrone.</text>
</comment>
<feature type="chain" id="PRO_0000456062" description="Conidial yellow pigment biosynthesis polyketide synthase melA">
    <location>
        <begin position="1"/>
        <end position="2138"/>
    </location>
</feature>
<feature type="domain" description="Ketosynthase family 3 (KS3)" evidence="5">
    <location>
        <begin position="373"/>
        <end position="804"/>
    </location>
</feature>
<feature type="domain" description="PKS/mFAS DH" evidence="6">
    <location>
        <begin position="1292"/>
        <end position="1596"/>
    </location>
</feature>
<feature type="domain" description="Carrier 1" evidence="4">
    <location>
        <begin position="1640"/>
        <end position="1714"/>
    </location>
</feature>
<feature type="domain" description="Carrier 2" evidence="4">
    <location>
        <begin position="1759"/>
        <end position="1836"/>
    </location>
</feature>
<feature type="region of interest" description="N-terminal acylcarrier protein transacylase domain (SAT)" evidence="3">
    <location>
        <begin position="8"/>
        <end position="244"/>
    </location>
</feature>
<feature type="region of interest" description="Malonyl-CoA:ACP transacylase (MAT) domain" evidence="3">
    <location>
        <begin position="910"/>
        <end position="1229"/>
    </location>
</feature>
<feature type="region of interest" description="Product template (PT) domain" evidence="3">
    <location>
        <begin position="1288"/>
        <end position="1601"/>
    </location>
</feature>
<feature type="region of interest" description="N-terminal hotdog fold" evidence="6">
    <location>
        <begin position="1292"/>
        <end position="1423"/>
    </location>
</feature>
<feature type="region of interest" description="C-terminal hotdog fold" evidence="6">
    <location>
        <begin position="1451"/>
        <end position="1596"/>
    </location>
</feature>
<feature type="region of interest" description="Disordered" evidence="8">
    <location>
        <begin position="1712"/>
        <end position="1758"/>
    </location>
</feature>
<feature type="region of interest" description="Claisen cyclase domain" evidence="1">
    <location>
        <begin position="1863"/>
        <end position="2135"/>
    </location>
</feature>
<feature type="compositionally biased region" description="Low complexity" evidence="8">
    <location>
        <begin position="1713"/>
        <end position="1739"/>
    </location>
</feature>
<feature type="compositionally biased region" description="Polar residues" evidence="8">
    <location>
        <begin position="1740"/>
        <end position="1758"/>
    </location>
</feature>
<feature type="active site" description="For beta-ketoacyl synthase activity" evidence="5">
    <location>
        <position position="545"/>
    </location>
</feature>
<feature type="active site" description="For beta-ketoacyl synthase activity" evidence="5">
    <location>
        <position position="680"/>
    </location>
</feature>
<feature type="active site" description="For beta-ketoacyl synthase activity" evidence="5">
    <location>
        <position position="722"/>
    </location>
</feature>
<feature type="active site" description="For acyl/malonyl transferase activity" evidence="7">
    <location>
        <position position="999"/>
    </location>
</feature>
<feature type="active site" description="Proton acceptor; for dehydratase activity" evidence="6">
    <location>
        <position position="1324"/>
    </location>
</feature>
<feature type="active site" description="Proton donor; for dehydratase activity" evidence="6">
    <location>
        <position position="1509"/>
    </location>
</feature>
<feature type="active site" description="For Claisen cyclase activity" evidence="1">
    <location>
        <position position="1953"/>
    </location>
</feature>
<feature type="modified residue" description="O-(pantetheine 4'-phosphoryl)serine" evidence="4">
    <location>
        <position position="1674"/>
    </location>
</feature>
<feature type="modified residue" description="O-(pantetheine 4'-phosphoryl)serine" evidence="4">
    <location>
        <position position="1796"/>
    </location>
</feature>
<gene>
    <name evidence="10" type="primary">melA</name>
    <name type="ORF">PEX2_000770</name>
</gene>
<organism>
    <name type="scientific">Penicillium expansum</name>
    <name type="common">Blue mold rot fungus</name>
    <dbReference type="NCBI Taxonomy" id="27334"/>
    <lineage>
        <taxon>Eukaryota</taxon>
        <taxon>Fungi</taxon>
        <taxon>Dikarya</taxon>
        <taxon>Ascomycota</taxon>
        <taxon>Pezizomycotina</taxon>
        <taxon>Eurotiomycetes</taxon>
        <taxon>Eurotiomycetidae</taxon>
        <taxon>Eurotiales</taxon>
        <taxon>Aspergillaceae</taxon>
        <taxon>Penicillium</taxon>
    </lineage>
</organism>
<keyword id="KW-0511">Multifunctional enzyme</keyword>
<keyword id="KW-0596">Phosphopantetheine</keyword>
<keyword id="KW-0597">Phosphoprotein</keyword>
<keyword id="KW-1185">Reference proteome</keyword>
<keyword id="KW-0677">Repeat</keyword>
<keyword id="KW-0808">Transferase</keyword>
<evidence type="ECO:0000250" key="1">
    <source>
        <dbReference type="UniProtKB" id="Q03149"/>
    </source>
</evidence>
<evidence type="ECO:0000250" key="2">
    <source>
        <dbReference type="UniProtKB" id="Q5B0D0"/>
    </source>
</evidence>
<evidence type="ECO:0000255" key="3"/>
<evidence type="ECO:0000255" key="4">
    <source>
        <dbReference type="PROSITE-ProRule" id="PRU00258"/>
    </source>
</evidence>
<evidence type="ECO:0000255" key="5">
    <source>
        <dbReference type="PROSITE-ProRule" id="PRU01348"/>
    </source>
</evidence>
<evidence type="ECO:0000255" key="6">
    <source>
        <dbReference type="PROSITE-ProRule" id="PRU01363"/>
    </source>
</evidence>
<evidence type="ECO:0000255" key="7">
    <source>
        <dbReference type="PROSITE-ProRule" id="PRU10022"/>
    </source>
</evidence>
<evidence type="ECO:0000256" key="8">
    <source>
        <dbReference type="SAM" id="MobiDB-lite"/>
    </source>
</evidence>
<evidence type="ECO:0000269" key="9">
    <source>
    </source>
</evidence>
<evidence type="ECO:0000303" key="10">
    <source>
    </source>
</evidence>
<protein>
    <recommendedName>
        <fullName evidence="10">Conidial yellow pigment biosynthesis polyketide synthase melA</fullName>
        <shortName evidence="10">PKS melA</shortName>
        <ecNumber evidence="1">2.3.1.-</ecNumber>
    </recommendedName>
</protein>
<name>MELA_PENEN</name>